<comment type="subcellular location">
    <subcellularLocation>
        <location>Virion</location>
    </subcellularLocation>
</comment>
<keyword id="KW-0175">Coiled coil</keyword>
<keyword id="KW-1185">Reference proteome</keyword>
<keyword id="KW-0946">Virion</keyword>
<feature type="chain" id="PRO_0000389080" description="Structural protein ORF800">
    <location>
        <begin position="1"/>
        <end position="800"/>
    </location>
</feature>
<feature type="region of interest" description="Disordered" evidence="2">
    <location>
        <begin position="759"/>
        <end position="800"/>
    </location>
</feature>
<feature type="coiled-coil region" evidence="1">
    <location>
        <begin position="98"/>
        <end position="130"/>
    </location>
</feature>
<feature type="coiled-coil region" evidence="1">
    <location>
        <begin position="447"/>
        <end position="475"/>
    </location>
</feature>
<feature type="coiled-coil region" evidence="1">
    <location>
        <begin position="514"/>
        <end position="567"/>
    </location>
</feature>
<feature type="coiled-coil region" evidence="1">
    <location>
        <begin position="606"/>
        <end position="633"/>
    </location>
</feature>
<feature type="compositionally biased region" description="Acidic residues" evidence="2">
    <location>
        <begin position="761"/>
        <end position="776"/>
    </location>
</feature>
<feature type="compositionally biased region" description="Basic and acidic residues" evidence="2">
    <location>
        <begin position="785"/>
        <end position="800"/>
    </location>
</feature>
<protein>
    <recommendedName>
        <fullName>Structural protein ORF800</fullName>
    </recommendedName>
</protein>
<accession>Q3V4R2</accession>
<name>Y800_ATV</name>
<dbReference type="EMBL" id="AJ888457">
    <property type="protein sequence ID" value="CAI59902.1"/>
    <property type="molecule type" value="Genomic_DNA"/>
</dbReference>
<dbReference type="RefSeq" id="YP_319879.1">
    <property type="nucleotide sequence ID" value="NC_007409.1"/>
</dbReference>
<dbReference type="GeneID" id="4484258"/>
<dbReference type="KEGG" id="vg:4484258"/>
<dbReference type="Proteomes" id="UP000002150">
    <property type="component" value="Genome"/>
</dbReference>
<dbReference type="GO" id="GO:0044423">
    <property type="term" value="C:virion component"/>
    <property type="evidence" value="ECO:0007669"/>
    <property type="project" value="UniProtKB-KW"/>
</dbReference>
<evidence type="ECO:0000255" key="1"/>
<evidence type="ECO:0000256" key="2">
    <source>
        <dbReference type="SAM" id="MobiDB-lite"/>
    </source>
</evidence>
<proteinExistence type="predicted"/>
<reference key="1">
    <citation type="journal article" date="2005" name="Nature">
        <title>Virology: independent virus development outside a host.</title>
        <authorList>
            <person name="Haring M."/>
            <person name="Vestergaard G."/>
            <person name="Rachel R."/>
            <person name="Chen L."/>
            <person name="Garrett R.A."/>
            <person name="Prangishvili D."/>
        </authorList>
    </citation>
    <scope>NUCLEOTIDE SEQUENCE [GENOMIC DNA]</scope>
</reference>
<organismHost>
    <name type="scientific">Acidianus convivator</name>
    <dbReference type="NCBI Taxonomy" id="269667"/>
</organismHost>
<organism>
    <name type="scientific">Acidianus two-tailed virus</name>
    <name type="common">ATV</name>
    <dbReference type="NCBI Taxonomy" id="315953"/>
    <lineage>
        <taxon>Viruses</taxon>
        <taxon>Viruses incertae sedis</taxon>
        <taxon>Bicaudaviridae</taxon>
        <taxon>Bicaudavirus</taxon>
    </lineage>
</organism>
<sequence>MSSNYVPPDVSRSKAKEIALVNKAIQLANQGDYDEALNIIDQLPPSDNTRQVKAYILVKKYLDLLKDTNTPLKDRINYANQLVAISQRYPNVFSPQDAENIVEYLKEEEKVKELLNKLNDALSQADYNLALQYAKQLNDILNNTQTNNLVKALQIVASVPPPPTPEGTITSFLSQLVDYYKNASQAYSEASKYEPMFRPVADTLSTSAEMLEELLTNVNQILTTHSVSNAEDALKNIENIVNESKSLPIAPITEDILNIAEEMVKQIQIDNEANQYLHSSVKALDEGDYTKAYEDAEKATELLGPNAPQSVKNYTNALAILTKTEPLPSPPSQIKGMQDLLSYFSNVGNALSKNYELTSKASSIYPAFKPIAEAYALHLKDNNHLVDALSKINKKPPKNSDQFAFMSAVLKQISQETAPQNFVTQTYQQIGSQLSTATSESANQYSLLAEANNLIDQANAVITQVNNMMNNANNLSLGEVSQLYKNAADTLEKQALPPMQEAYKILQELAKQGAINQDSVNQVEENIQNIQNTITEFDMLSTAYEYLDQANAVITQVNNMMNNANNLSLGEVSQLYKNAADTLEKQALPPMQEAYKILQELAKQGAINQDSVNQVEENIQNIQNTITEFNLLAVAYGYMNEGYNQLQKLSNVSSPSQGVIIARSAKHYFEQASREFERANVNPNPAKPAIEQATDLILGFDELEKAQNTIAPERKHIAGARPPNPPTNAELAKYYEQLSNAYNTAAEYAYNAEKYFAEAESIAESESETTESENNETTESTANSEGEKQEGEHGARLIRV</sequence>